<feature type="chain" id="PRO_0000228205" description="Translation initiation factor IF-2">
    <location>
        <begin position="1"/>
        <end position="877"/>
    </location>
</feature>
<feature type="domain" description="tr-type G">
    <location>
        <begin position="378"/>
        <end position="547"/>
    </location>
</feature>
<feature type="region of interest" description="Disordered" evidence="3">
    <location>
        <begin position="48"/>
        <end position="289"/>
    </location>
</feature>
<feature type="region of interest" description="G1" evidence="1">
    <location>
        <begin position="387"/>
        <end position="394"/>
    </location>
</feature>
<feature type="region of interest" description="G2" evidence="1">
    <location>
        <begin position="412"/>
        <end position="416"/>
    </location>
</feature>
<feature type="region of interest" description="G3" evidence="1">
    <location>
        <begin position="433"/>
        <end position="436"/>
    </location>
</feature>
<feature type="region of interest" description="G4" evidence="1">
    <location>
        <begin position="487"/>
        <end position="490"/>
    </location>
</feature>
<feature type="region of interest" description="G5" evidence="1">
    <location>
        <begin position="523"/>
        <end position="525"/>
    </location>
</feature>
<feature type="compositionally biased region" description="Basic and acidic residues" evidence="3">
    <location>
        <begin position="78"/>
        <end position="89"/>
    </location>
</feature>
<feature type="compositionally biased region" description="Basic residues" evidence="3">
    <location>
        <begin position="92"/>
        <end position="101"/>
    </location>
</feature>
<feature type="compositionally biased region" description="Basic and acidic residues" evidence="3">
    <location>
        <begin position="102"/>
        <end position="116"/>
    </location>
</feature>
<feature type="compositionally biased region" description="Low complexity" evidence="3">
    <location>
        <begin position="123"/>
        <end position="132"/>
    </location>
</feature>
<feature type="compositionally biased region" description="Basic and acidic residues" evidence="3">
    <location>
        <begin position="135"/>
        <end position="155"/>
    </location>
</feature>
<feature type="compositionally biased region" description="Basic and acidic residues" evidence="3">
    <location>
        <begin position="162"/>
        <end position="189"/>
    </location>
</feature>
<feature type="compositionally biased region" description="Basic residues" evidence="3">
    <location>
        <begin position="277"/>
        <end position="286"/>
    </location>
</feature>
<feature type="binding site" evidence="2">
    <location>
        <begin position="387"/>
        <end position="394"/>
    </location>
    <ligand>
        <name>GTP</name>
        <dbReference type="ChEBI" id="CHEBI:37565"/>
    </ligand>
</feature>
<feature type="binding site" evidence="2">
    <location>
        <begin position="433"/>
        <end position="437"/>
    </location>
    <ligand>
        <name>GTP</name>
        <dbReference type="ChEBI" id="CHEBI:37565"/>
    </ligand>
</feature>
<feature type="binding site" evidence="2">
    <location>
        <begin position="487"/>
        <end position="490"/>
    </location>
    <ligand>
        <name>GTP</name>
        <dbReference type="ChEBI" id="CHEBI:37565"/>
    </ligand>
</feature>
<comment type="function">
    <text evidence="2">One of the essential components for the initiation of protein synthesis. Protects formylmethionyl-tRNA from spontaneous hydrolysis and promotes its binding to the 30S ribosomal subunits. Also involved in the hydrolysis of GTP during the formation of the 70S ribosomal complex.</text>
</comment>
<comment type="subcellular location">
    <subcellularLocation>
        <location evidence="2">Cytoplasm</location>
    </subcellularLocation>
</comment>
<comment type="similarity">
    <text evidence="2">Belongs to the TRAFAC class translation factor GTPase superfamily. Classic translation factor GTPase family. IF-2 subfamily.</text>
</comment>
<gene>
    <name evidence="2" type="primary">infB</name>
    <name type="ordered locus">LBA1255</name>
</gene>
<keyword id="KW-0963">Cytoplasm</keyword>
<keyword id="KW-0342">GTP-binding</keyword>
<keyword id="KW-0396">Initiation factor</keyword>
<keyword id="KW-0547">Nucleotide-binding</keyword>
<keyword id="KW-0648">Protein biosynthesis</keyword>
<keyword id="KW-1185">Reference proteome</keyword>
<organism>
    <name type="scientific">Lactobacillus acidophilus (strain ATCC 700396 / NCK56 / N2 / NCFM)</name>
    <dbReference type="NCBI Taxonomy" id="272621"/>
    <lineage>
        <taxon>Bacteria</taxon>
        <taxon>Bacillati</taxon>
        <taxon>Bacillota</taxon>
        <taxon>Bacilli</taxon>
        <taxon>Lactobacillales</taxon>
        <taxon>Lactobacillaceae</taxon>
        <taxon>Lactobacillus</taxon>
    </lineage>
</organism>
<proteinExistence type="inferred from homology"/>
<accession>Q5FJN6</accession>
<sequence>MAKKRIYEVAKEVGVDNKVVVQKAKDLGFDVKNHMSSIDDSQVAKLKSSFQNSAPAEKKAEKSATKNNKIKISVSSIRKNEKKPEENNTPKKSNRRRNNKRRSSDRARDNKERDAKSNTGRPKAAALLQQFKQKQRAEEGQLNREAQKAKKEYHEHLKHPKKEQSEKDNKKTVKESNNKKVEQQVEKKVIGPKILKPSPARLKKNQPADNKEKVTTPRVTIPEAPKEEKRGNGRGRNMGKPGRKGKNQFVNGHSERSDRSERKRRKNKKHQQEQQKPRKQITKRKERPLPDILVYEEGMNAQDIGKLIHREPAEIVKKLFMLGVMTNQNQSLDKDTIELLAAEYGIDAKQKVHEDISDIDTLYDKRMEASKKSKNQIKRPPVVTIMGHVDHGKTTLLDRLRHTHVSAHEAGGITQRIGAYQVRLDDRLITFLDTPGHAAFSNMRARGAEITDIVVLVVAADDGVMPQTVEAIDHAKSANVPIIVAINKMDKPGANPQHVTEELMKYNLIPEDYGGDTIFVNISAKTGQNVDDLLQMILLQADVMELKANPDEMAIGTVIEARLSRGRGPVADVLIQQGTLNIGDPIVVGDTFGRVRTMTNDRGRQVKKATPSEPVEITGLNDVPESADKLVEFKDEKTARSVGEARAQQSLQKSRENVQHVTLDNLFDTMKKENMKEVDIVLKADVQGSVEALQQSLEKIEVEGVRVNIIHSGVGAINESDVTLAGASNAFIIGFNVRPTATAKSQAETDGVDIRLYSIIYKAIDDVTAAMKGMLEPTYEEKVIGNLTVRETWKVSKVGTIAGSFVDKGIVKNDSKIRVIRDGIVKYDGEIASLKRFKDDVKEVKQGNDCGLTIKDYNDIKVGDEFEVYEMQQVEPK</sequence>
<protein>
    <recommendedName>
        <fullName evidence="2">Translation initiation factor IF-2</fullName>
    </recommendedName>
</protein>
<reference key="1">
    <citation type="journal article" date="2005" name="Proc. Natl. Acad. Sci. U.S.A.">
        <title>Complete genome sequence of the probiotic lactic acid bacterium Lactobacillus acidophilus NCFM.</title>
        <authorList>
            <person name="Altermann E."/>
            <person name="Russell W.M."/>
            <person name="Azcarate-Peril M.A."/>
            <person name="Barrangou R."/>
            <person name="Buck B.L."/>
            <person name="McAuliffe O."/>
            <person name="Souther N."/>
            <person name="Dobson A."/>
            <person name="Duong T."/>
            <person name="Callanan M."/>
            <person name="Lick S."/>
            <person name="Hamrick A."/>
            <person name="Cano R."/>
            <person name="Klaenhammer T.R."/>
        </authorList>
    </citation>
    <scope>NUCLEOTIDE SEQUENCE [LARGE SCALE GENOMIC DNA]</scope>
    <source>
        <strain>ATCC 700396 / NCK56 / N2 / NCFM</strain>
    </source>
</reference>
<dbReference type="EMBL" id="CP000033">
    <property type="protein sequence ID" value="AAV43088.1"/>
    <property type="molecule type" value="Genomic_DNA"/>
</dbReference>
<dbReference type="RefSeq" id="WP_011254396.1">
    <property type="nucleotide sequence ID" value="NC_006814.3"/>
</dbReference>
<dbReference type="RefSeq" id="YP_194119.1">
    <property type="nucleotide sequence ID" value="NC_006814.3"/>
</dbReference>
<dbReference type="SMR" id="Q5FJN6"/>
<dbReference type="STRING" id="272621.LBA1255"/>
<dbReference type="GeneID" id="93289655"/>
<dbReference type="KEGG" id="lac:LBA1255"/>
<dbReference type="PATRIC" id="fig|272621.13.peg.1190"/>
<dbReference type="eggNOG" id="COG0532">
    <property type="taxonomic scope" value="Bacteria"/>
</dbReference>
<dbReference type="HOGENOM" id="CLU_006301_5_0_9"/>
<dbReference type="OrthoDB" id="9811804at2"/>
<dbReference type="BioCyc" id="LACI272621:G1G49-1238-MONOMER"/>
<dbReference type="Proteomes" id="UP000006381">
    <property type="component" value="Chromosome"/>
</dbReference>
<dbReference type="GO" id="GO:0005829">
    <property type="term" value="C:cytosol"/>
    <property type="evidence" value="ECO:0007669"/>
    <property type="project" value="TreeGrafter"/>
</dbReference>
<dbReference type="GO" id="GO:0005525">
    <property type="term" value="F:GTP binding"/>
    <property type="evidence" value="ECO:0007669"/>
    <property type="project" value="UniProtKB-KW"/>
</dbReference>
<dbReference type="GO" id="GO:0003924">
    <property type="term" value="F:GTPase activity"/>
    <property type="evidence" value="ECO:0007669"/>
    <property type="project" value="UniProtKB-UniRule"/>
</dbReference>
<dbReference type="GO" id="GO:0003743">
    <property type="term" value="F:translation initiation factor activity"/>
    <property type="evidence" value="ECO:0007669"/>
    <property type="project" value="UniProtKB-UniRule"/>
</dbReference>
<dbReference type="CDD" id="cd01887">
    <property type="entry name" value="IF2_eIF5B"/>
    <property type="match status" value="1"/>
</dbReference>
<dbReference type="CDD" id="cd03702">
    <property type="entry name" value="IF2_mtIF2_II"/>
    <property type="match status" value="1"/>
</dbReference>
<dbReference type="CDD" id="cd03692">
    <property type="entry name" value="mtIF2_IVc"/>
    <property type="match status" value="1"/>
</dbReference>
<dbReference type="FunFam" id="2.40.30.10:FF:000007">
    <property type="entry name" value="Translation initiation factor IF-2"/>
    <property type="match status" value="1"/>
</dbReference>
<dbReference type="FunFam" id="2.40.30.10:FF:000008">
    <property type="entry name" value="Translation initiation factor IF-2"/>
    <property type="match status" value="1"/>
</dbReference>
<dbReference type="FunFam" id="3.40.50.10050:FF:000001">
    <property type="entry name" value="Translation initiation factor IF-2"/>
    <property type="match status" value="1"/>
</dbReference>
<dbReference type="FunFam" id="3.40.50.300:FF:000019">
    <property type="entry name" value="Translation initiation factor IF-2"/>
    <property type="match status" value="1"/>
</dbReference>
<dbReference type="Gene3D" id="1.10.10.2480">
    <property type="match status" value="1"/>
</dbReference>
<dbReference type="Gene3D" id="3.40.50.300">
    <property type="entry name" value="P-loop containing nucleotide triphosphate hydrolases"/>
    <property type="match status" value="1"/>
</dbReference>
<dbReference type="Gene3D" id="2.40.30.10">
    <property type="entry name" value="Translation factors"/>
    <property type="match status" value="2"/>
</dbReference>
<dbReference type="Gene3D" id="3.40.50.10050">
    <property type="entry name" value="Translation initiation factor IF- 2, domain 3"/>
    <property type="match status" value="1"/>
</dbReference>
<dbReference type="HAMAP" id="MF_00100_B">
    <property type="entry name" value="IF_2_B"/>
    <property type="match status" value="1"/>
</dbReference>
<dbReference type="InterPro" id="IPR053905">
    <property type="entry name" value="EF-G-like_DII"/>
</dbReference>
<dbReference type="InterPro" id="IPR044145">
    <property type="entry name" value="IF2_II"/>
</dbReference>
<dbReference type="InterPro" id="IPR006847">
    <property type="entry name" value="IF2_N"/>
</dbReference>
<dbReference type="InterPro" id="IPR027417">
    <property type="entry name" value="P-loop_NTPase"/>
</dbReference>
<dbReference type="InterPro" id="IPR005225">
    <property type="entry name" value="Small_GTP-bd"/>
</dbReference>
<dbReference type="InterPro" id="IPR000795">
    <property type="entry name" value="T_Tr_GTP-bd_dom"/>
</dbReference>
<dbReference type="InterPro" id="IPR000178">
    <property type="entry name" value="TF_IF2_bacterial-like"/>
</dbReference>
<dbReference type="InterPro" id="IPR015760">
    <property type="entry name" value="TIF_IF2"/>
</dbReference>
<dbReference type="InterPro" id="IPR023115">
    <property type="entry name" value="TIF_IF2_dom3"/>
</dbReference>
<dbReference type="InterPro" id="IPR036925">
    <property type="entry name" value="TIF_IF2_dom3_sf"/>
</dbReference>
<dbReference type="InterPro" id="IPR009000">
    <property type="entry name" value="Transl_B-barrel_sf"/>
</dbReference>
<dbReference type="NCBIfam" id="TIGR00487">
    <property type="entry name" value="IF-2"/>
    <property type="match status" value="1"/>
</dbReference>
<dbReference type="NCBIfam" id="TIGR00231">
    <property type="entry name" value="small_GTP"/>
    <property type="match status" value="1"/>
</dbReference>
<dbReference type="PANTHER" id="PTHR43381:SF5">
    <property type="entry name" value="TR-TYPE G DOMAIN-CONTAINING PROTEIN"/>
    <property type="match status" value="1"/>
</dbReference>
<dbReference type="PANTHER" id="PTHR43381">
    <property type="entry name" value="TRANSLATION INITIATION FACTOR IF-2-RELATED"/>
    <property type="match status" value="1"/>
</dbReference>
<dbReference type="Pfam" id="PF22042">
    <property type="entry name" value="EF-G_D2"/>
    <property type="match status" value="1"/>
</dbReference>
<dbReference type="Pfam" id="PF00009">
    <property type="entry name" value="GTP_EFTU"/>
    <property type="match status" value="1"/>
</dbReference>
<dbReference type="Pfam" id="PF11987">
    <property type="entry name" value="IF-2"/>
    <property type="match status" value="1"/>
</dbReference>
<dbReference type="Pfam" id="PF04760">
    <property type="entry name" value="IF2_N"/>
    <property type="match status" value="2"/>
</dbReference>
<dbReference type="SUPFAM" id="SSF52156">
    <property type="entry name" value="Initiation factor IF2/eIF5b, domain 3"/>
    <property type="match status" value="1"/>
</dbReference>
<dbReference type="SUPFAM" id="SSF52540">
    <property type="entry name" value="P-loop containing nucleoside triphosphate hydrolases"/>
    <property type="match status" value="1"/>
</dbReference>
<dbReference type="SUPFAM" id="SSF50447">
    <property type="entry name" value="Translation proteins"/>
    <property type="match status" value="2"/>
</dbReference>
<dbReference type="PROSITE" id="PS51722">
    <property type="entry name" value="G_TR_2"/>
    <property type="match status" value="1"/>
</dbReference>
<dbReference type="PROSITE" id="PS01176">
    <property type="entry name" value="IF2"/>
    <property type="match status" value="1"/>
</dbReference>
<evidence type="ECO:0000250" key="1"/>
<evidence type="ECO:0000255" key="2">
    <source>
        <dbReference type="HAMAP-Rule" id="MF_00100"/>
    </source>
</evidence>
<evidence type="ECO:0000256" key="3">
    <source>
        <dbReference type="SAM" id="MobiDB-lite"/>
    </source>
</evidence>
<name>IF2_LACAC</name>